<protein>
    <recommendedName>
        <fullName evidence="1">DNA mismatch repair protein MutS</fullName>
    </recommendedName>
</protein>
<proteinExistence type="inferred from homology"/>
<organism>
    <name type="scientific">Methanothrix thermoacetophila (strain DSM 6194 / JCM 14653 / NBRC 101360 / PT)</name>
    <name type="common">Methanosaeta thermophila</name>
    <dbReference type="NCBI Taxonomy" id="349307"/>
    <lineage>
        <taxon>Archaea</taxon>
        <taxon>Methanobacteriati</taxon>
        <taxon>Methanobacteriota</taxon>
        <taxon>Stenosarchaea group</taxon>
        <taxon>Methanomicrobia</taxon>
        <taxon>Methanotrichales</taxon>
        <taxon>Methanotrichaceae</taxon>
        <taxon>Methanothrix</taxon>
    </lineage>
</organism>
<sequence length="857" mass="95811">MMVRLSPLMEQYSRIKQQCPDALLLFRVGDFYETFGEDAITTSRTLNITLTSRQKDDEGNRIPLAGIPYHSLDVYLSRLVNAGHKVAICEQVEDPKQAKGIVRREITRIVTPGTVIEPALLQERSNNYLAAVLLENGLAGLSLLDLSTGDFIASEVPVERLGSELARFSPAECLAPPGVSLEGMKFQNLDAELFSLNEASESGGILGDLHKRSPLCARAACAILSYLRETRIQSVDHIKPIRMISSSEYMLLDEITLRNLEIFRNLRDGSRSGTLMEILDETVTPMGSRTLARWLQMPSMSLEVIRRRQDAIEEMVRRAVIREEISELLDGLSDLERIIGRVSLGNAGPKDLVALRSSLRRIPEIAHAMSALESEYLVEIRKRLDASELDDLVVLLERALSDDPPTSPRDGGVIRDGYSPELDEIRSALRNGRSWIAELESSERKRTGIKSLKVGYNNVFGYYIEVTKPNLSMVPDDYIRKQTLSNAERFVTRELKEVESRVLSAQERSSALEYEVFLDLRGQVASRTRSVQEVAAAIGELDTILGLTRAALMGAMVRPVVDAGREVILRDSRHPVLDRVMKGGFVPNDLTMDESSWFMILTGPNMAGKSTFMRQVALIAIMAQIGSFVPASYAKIGLIDRIFTRVGARDDLVSGRSTFMVEMSELANILVSATKDSLILLDEIGRGTSTFDGLSIAWAVSEYIHSRIKAKTIFATHYHQLTQLNLPGIVNYSMAVKEEGRSITFLRTVVPGATNKSYGIHVARLAGVPEHVIRRAEELLDIIEEQAAIEIRKCRSKERPKRYTQLIFFNQPESIDNDILEEIKNLEPEKITPLQALNLLVEYRRRLGCKDAKDTHT</sequence>
<reference key="1">
    <citation type="submission" date="2006-10" db="EMBL/GenBank/DDBJ databases">
        <title>Complete sequence of Methanosaeta thermophila PT.</title>
        <authorList>
            <consortium name="US DOE Joint Genome Institute"/>
            <person name="Copeland A."/>
            <person name="Lucas S."/>
            <person name="Lapidus A."/>
            <person name="Barry K."/>
            <person name="Detter J.C."/>
            <person name="Glavina del Rio T."/>
            <person name="Hammon N."/>
            <person name="Israni S."/>
            <person name="Pitluck S."/>
            <person name="Chain P."/>
            <person name="Malfatti S."/>
            <person name="Shin M."/>
            <person name="Vergez L."/>
            <person name="Schmutz J."/>
            <person name="Larimer F."/>
            <person name="Land M."/>
            <person name="Hauser L."/>
            <person name="Kyrpides N."/>
            <person name="Kim E."/>
            <person name="Smith K.S."/>
            <person name="Ingram-Smith C."/>
            <person name="Richardson P."/>
        </authorList>
    </citation>
    <scope>NUCLEOTIDE SEQUENCE [LARGE SCALE GENOMIC DNA]</scope>
    <source>
        <strain>DSM 6194 / JCM 14653 / NBRC 101360 / PT</strain>
    </source>
</reference>
<comment type="function">
    <text evidence="1">This protein is involved in the repair of mismatches in DNA. It is possible that it carries out the mismatch recognition step. This protein has a weak ATPase activity.</text>
</comment>
<comment type="similarity">
    <text evidence="1">Belongs to the DNA mismatch repair MutS family.</text>
</comment>
<accession>A0B976</accession>
<keyword id="KW-0067">ATP-binding</keyword>
<keyword id="KW-0227">DNA damage</keyword>
<keyword id="KW-0234">DNA repair</keyword>
<keyword id="KW-0238">DNA-binding</keyword>
<keyword id="KW-0547">Nucleotide-binding</keyword>
<keyword id="KW-1185">Reference proteome</keyword>
<dbReference type="EMBL" id="CP000477">
    <property type="protein sequence ID" value="ABK15250.1"/>
    <property type="molecule type" value="Genomic_DNA"/>
</dbReference>
<dbReference type="SMR" id="A0B976"/>
<dbReference type="STRING" id="349307.Mthe_1477"/>
<dbReference type="KEGG" id="mtp:Mthe_1477"/>
<dbReference type="HOGENOM" id="CLU_002472_3_1_2"/>
<dbReference type="OrthoDB" id="146065at2157"/>
<dbReference type="Proteomes" id="UP000000674">
    <property type="component" value="Chromosome"/>
</dbReference>
<dbReference type="GO" id="GO:0005524">
    <property type="term" value="F:ATP binding"/>
    <property type="evidence" value="ECO:0007669"/>
    <property type="project" value="UniProtKB-UniRule"/>
</dbReference>
<dbReference type="GO" id="GO:0140664">
    <property type="term" value="F:ATP-dependent DNA damage sensor activity"/>
    <property type="evidence" value="ECO:0007669"/>
    <property type="project" value="InterPro"/>
</dbReference>
<dbReference type="GO" id="GO:0003684">
    <property type="term" value="F:damaged DNA binding"/>
    <property type="evidence" value="ECO:0007669"/>
    <property type="project" value="UniProtKB-UniRule"/>
</dbReference>
<dbReference type="GO" id="GO:0030983">
    <property type="term" value="F:mismatched DNA binding"/>
    <property type="evidence" value="ECO:0007669"/>
    <property type="project" value="InterPro"/>
</dbReference>
<dbReference type="GO" id="GO:0006298">
    <property type="term" value="P:mismatch repair"/>
    <property type="evidence" value="ECO:0007669"/>
    <property type="project" value="UniProtKB-UniRule"/>
</dbReference>
<dbReference type="CDD" id="cd03284">
    <property type="entry name" value="ABC_MutS1"/>
    <property type="match status" value="1"/>
</dbReference>
<dbReference type="FunFam" id="1.10.1420.10:FF:000007">
    <property type="entry name" value="DNA mismatch repair protein MutS"/>
    <property type="match status" value="1"/>
</dbReference>
<dbReference type="FunFam" id="3.40.1170.10:FF:000001">
    <property type="entry name" value="DNA mismatch repair protein MutS"/>
    <property type="match status" value="1"/>
</dbReference>
<dbReference type="FunFam" id="3.40.50.300:FF:000870">
    <property type="entry name" value="MutS protein homolog 4"/>
    <property type="match status" value="1"/>
</dbReference>
<dbReference type="Gene3D" id="1.10.1420.10">
    <property type="match status" value="2"/>
</dbReference>
<dbReference type="Gene3D" id="3.40.1170.10">
    <property type="entry name" value="DNA repair protein MutS, domain I"/>
    <property type="match status" value="1"/>
</dbReference>
<dbReference type="Gene3D" id="3.30.420.110">
    <property type="entry name" value="MutS, connector domain"/>
    <property type="match status" value="1"/>
</dbReference>
<dbReference type="Gene3D" id="3.40.50.300">
    <property type="entry name" value="P-loop containing nucleotide triphosphate hydrolases"/>
    <property type="match status" value="1"/>
</dbReference>
<dbReference type="HAMAP" id="MF_00096">
    <property type="entry name" value="MutS"/>
    <property type="match status" value="1"/>
</dbReference>
<dbReference type="InterPro" id="IPR005748">
    <property type="entry name" value="DNA_mismatch_repair_MutS"/>
</dbReference>
<dbReference type="InterPro" id="IPR007695">
    <property type="entry name" value="DNA_mismatch_repair_MutS-lik_N"/>
</dbReference>
<dbReference type="InterPro" id="IPR017261">
    <property type="entry name" value="DNA_mismatch_repair_MutS/MSH"/>
</dbReference>
<dbReference type="InterPro" id="IPR000432">
    <property type="entry name" value="DNA_mismatch_repair_MutS_C"/>
</dbReference>
<dbReference type="InterPro" id="IPR007861">
    <property type="entry name" value="DNA_mismatch_repair_MutS_clamp"/>
</dbReference>
<dbReference type="InterPro" id="IPR007696">
    <property type="entry name" value="DNA_mismatch_repair_MutS_core"/>
</dbReference>
<dbReference type="InterPro" id="IPR016151">
    <property type="entry name" value="DNA_mismatch_repair_MutS_N"/>
</dbReference>
<dbReference type="InterPro" id="IPR036187">
    <property type="entry name" value="DNA_mismatch_repair_MutS_sf"/>
</dbReference>
<dbReference type="InterPro" id="IPR007860">
    <property type="entry name" value="DNA_mmatch_repair_MutS_con_dom"/>
</dbReference>
<dbReference type="InterPro" id="IPR045076">
    <property type="entry name" value="MutS"/>
</dbReference>
<dbReference type="InterPro" id="IPR036678">
    <property type="entry name" value="MutS_con_dom_sf"/>
</dbReference>
<dbReference type="InterPro" id="IPR027417">
    <property type="entry name" value="P-loop_NTPase"/>
</dbReference>
<dbReference type="NCBIfam" id="TIGR01070">
    <property type="entry name" value="mutS1"/>
    <property type="match status" value="1"/>
</dbReference>
<dbReference type="NCBIfam" id="NF003810">
    <property type="entry name" value="PRK05399.1"/>
    <property type="match status" value="1"/>
</dbReference>
<dbReference type="PANTHER" id="PTHR11361:SF34">
    <property type="entry name" value="DNA MISMATCH REPAIR PROTEIN MSH1, MITOCHONDRIAL"/>
    <property type="match status" value="1"/>
</dbReference>
<dbReference type="PANTHER" id="PTHR11361">
    <property type="entry name" value="DNA MISMATCH REPAIR PROTEIN MUTS FAMILY MEMBER"/>
    <property type="match status" value="1"/>
</dbReference>
<dbReference type="Pfam" id="PF01624">
    <property type="entry name" value="MutS_I"/>
    <property type="match status" value="1"/>
</dbReference>
<dbReference type="Pfam" id="PF05188">
    <property type="entry name" value="MutS_II"/>
    <property type="match status" value="1"/>
</dbReference>
<dbReference type="Pfam" id="PF05192">
    <property type="entry name" value="MutS_III"/>
    <property type="match status" value="1"/>
</dbReference>
<dbReference type="Pfam" id="PF05190">
    <property type="entry name" value="MutS_IV"/>
    <property type="match status" value="1"/>
</dbReference>
<dbReference type="Pfam" id="PF00488">
    <property type="entry name" value="MutS_V"/>
    <property type="match status" value="1"/>
</dbReference>
<dbReference type="PIRSF" id="PIRSF037677">
    <property type="entry name" value="DNA_mis_repair_Msh6"/>
    <property type="match status" value="1"/>
</dbReference>
<dbReference type="SMART" id="SM00534">
    <property type="entry name" value="MUTSac"/>
    <property type="match status" value="1"/>
</dbReference>
<dbReference type="SMART" id="SM00533">
    <property type="entry name" value="MUTSd"/>
    <property type="match status" value="1"/>
</dbReference>
<dbReference type="SUPFAM" id="SSF55271">
    <property type="entry name" value="DNA repair protein MutS, domain I"/>
    <property type="match status" value="1"/>
</dbReference>
<dbReference type="SUPFAM" id="SSF53150">
    <property type="entry name" value="DNA repair protein MutS, domain II"/>
    <property type="match status" value="1"/>
</dbReference>
<dbReference type="SUPFAM" id="SSF48334">
    <property type="entry name" value="DNA repair protein MutS, domain III"/>
    <property type="match status" value="1"/>
</dbReference>
<dbReference type="SUPFAM" id="SSF52540">
    <property type="entry name" value="P-loop containing nucleoside triphosphate hydrolases"/>
    <property type="match status" value="1"/>
</dbReference>
<dbReference type="PROSITE" id="PS00486">
    <property type="entry name" value="DNA_MISMATCH_REPAIR_2"/>
    <property type="match status" value="1"/>
</dbReference>
<feature type="chain" id="PRO_1000008076" description="DNA mismatch repair protein MutS">
    <location>
        <begin position="1"/>
        <end position="857"/>
    </location>
</feature>
<feature type="binding site" evidence="1">
    <location>
        <begin position="603"/>
        <end position="610"/>
    </location>
    <ligand>
        <name>ATP</name>
        <dbReference type="ChEBI" id="CHEBI:30616"/>
    </ligand>
</feature>
<evidence type="ECO:0000255" key="1">
    <source>
        <dbReference type="HAMAP-Rule" id="MF_00096"/>
    </source>
</evidence>
<gene>
    <name evidence="1" type="primary">mutS</name>
    <name type="ordered locus">Mthe_1477</name>
</gene>
<name>MUTS_METTP</name>